<proteinExistence type="inferred from homology"/>
<feature type="chain" id="PRO_0000076699" description="3-isopropylmalate dehydratase large subunit">
    <location>
        <begin position="1"/>
        <end position="472"/>
    </location>
</feature>
<feature type="binding site" evidence="1">
    <location>
        <position position="347"/>
    </location>
    <ligand>
        <name>[4Fe-4S] cluster</name>
        <dbReference type="ChEBI" id="CHEBI:49883"/>
    </ligand>
</feature>
<feature type="binding site" evidence="1">
    <location>
        <position position="407"/>
    </location>
    <ligand>
        <name>[4Fe-4S] cluster</name>
        <dbReference type="ChEBI" id="CHEBI:49883"/>
    </ligand>
</feature>
<feature type="binding site" evidence="1">
    <location>
        <position position="410"/>
    </location>
    <ligand>
        <name>[4Fe-4S] cluster</name>
        <dbReference type="ChEBI" id="CHEBI:49883"/>
    </ligand>
</feature>
<evidence type="ECO:0000255" key="1">
    <source>
        <dbReference type="HAMAP-Rule" id="MF_01026"/>
    </source>
</evidence>
<gene>
    <name evidence="1" type="primary">leuC</name>
    <name type="ordered locus">BLi02956</name>
    <name type="ordered locus">BL00613</name>
</gene>
<name>LEUC_BACLD</name>
<protein>
    <recommendedName>
        <fullName evidence="1">3-isopropylmalate dehydratase large subunit</fullName>
        <ecNumber evidence="1">4.2.1.33</ecNumber>
    </recommendedName>
    <alternativeName>
        <fullName evidence="1">Alpha-IPM isomerase</fullName>
        <shortName evidence="1">IPMI</shortName>
    </alternativeName>
    <alternativeName>
        <fullName evidence="1">Isopropylmalate isomerase</fullName>
    </alternativeName>
</protein>
<comment type="function">
    <text evidence="1">Catalyzes the isomerization between 2-isopropylmalate and 3-isopropylmalate, via the formation of 2-isopropylmaleate.</text>
</comment>
<comment type="catalytic activity">
    <reaction evidence="1">
        <text>(2R,3S)-3-isopropylmalate = (2S)-2-isopropylmalate</text>
        <dbReference type="Rhea" id="RHEA:32287"/>
        <dbReference type="ChEBI" id="CHEBI:1178"/>
        <dbReference type="ChEBI" id="CHEBI:35121"/>
        <dbReference type="EC" id="4.2.1.33"/>
    </reaction>
</comment>
<comment type="cofactor">
    <cofactor evidence="1">
        <name>[4Fe-4S] cluster</name>
        <dbReference type="ChEBI" id="CHEBI:49883"/>
    </cofactor>
    <text evidence="1">Binds 1 [4Fe-4S] cluster per subunit.</text>
</comment>
<comment type="pathway">
    <text evidence="1">Amino-acid biosynthesis; L-leucine biosynthesis; L-leucine from 3-methyl-2-oxobutanoate: step 2/4.</text>
</comment>
<comment type="subunit">
    <text evidence="1">Heterodimer of LeuC and LeuD.</text>
</comment>
<comment type="similarity">
    <text evidence="1">Belongs to the aconitase/IPM isomerase family. LeuC type 1 subfamily.</text>
</comment>
<sequence>MMPRTIIEKIWDQHVIKKGEGKPDLLYIDLHLIHEVTSPQAFEGLRQKNRKVRRPQNTFATMDHNIPTVNRFEIKDDVAKRQVSALERNCEEFGIRLADLSSVDQGIVHVIGPELGLTLPGKTIVCGDSHTSTHGAFGALAFGIGTSEVEHVLSTQTLWQQKPKTLEIRVDGKLQKGVTAKDVILAIIGKYGVKFGAGYVIEYTGEVFRNMSMDERMTVCNMSIEAGARAGLIAPDETTFEYVKTKKYAPKGEDFEKAVEEWKNLKTDPGAVYDRTIVMDGSAISPMVTWGINPGMVLPVDETIPGPEAFLQEDDKKEAQRAYEYMGLEPYKKIEDITIEHVFIGSCTNSRMTDLRQAAEMIKGQKVADGVRAIVVPGSQSVKIQAEKEGLHKIFIEAGFEWRESGCSMCLSMNNDVVPEGERCASTSNRNFEGRQGKGARTHLVSPAMAAMAAIHGRFVDVRKYYQETTAV</sequence>
<accession>Q65GJ0</accession>
<accession>Q62RZ8</accession>
<keyword id="KW-0004">4Fe-4S</keyword>
<keyword id="KW-0028">Amino-acid biosynthesis</keyword>
<keyword id="KW-0100">Branched-chain amino acid biosynthesis</keyword>
<keyword id="KW-0408">Iron</keyword>
<keyword id="KW-0411">Iron-sulfur</keyword>
<keyword id="KW-0432">Leucine biosynthesis</keyword>
<keyword id="KW-0456">Lyase</keyword>
<keyword id="KW-0479">Metal-binding</keyword>
<keyword id="KW-1185">Reference proteome</keyword>
<dbReference type="EC" id="4.2.1.33" evidence="1"/>
<dbReference type="EMBL" id="AE017333">
    <property type="protein sequence ID" value="AAU41824.1"/>
    <property type="molecule type" value="Genomic_DNA"/>
</dbReference>
<dbReference type="EMBL" id="CP000002">
    <property type="protein sequence ID" value="AAU24462.1"/>
    <property type="molecule type" value="Genomic_DNA"/>
</dbReference>
<dbReference type="RefSeq" id="WP_009329313.1">
    <property type="nucleotide sequence ID" value="NC_006322.1"/>
</dbReference>
<dbReference type="SMR" id="Q65GJ0"/>
<dbReference type="STRING" id="279010.BL00613"/>
<dbReference type="GeneID" id="92860450"/>
<dbReference type="KEGG" id="bld:BLi02956"/>
<dbReference type="KEGG" id="bli:BL00613"/>
<dbReference type="eggNOG" id="COG0065">
    <property type="taxonomic scope" value="Bacteria"/>
</dbReference>
<dbReference type="HOGENOM" id="CLU_006714_3_4_9"/>
<dbReference type="UniPathway" id="UPA00048">
    <property type="reaction ID" value="UER00071"/>
</dbReference>
<dbReference type="Proteomes" id="UP000000606">
    <property type="component" value="Chromosome"/>
</dbReference>
<dbReference type="GO" id="GO:0003861">
    <property type="term" value="F:3-isopropylmalate dehydratase activity"/>
    <property type="evidence" value="ECO:0007669"/>
    <property type="project" value="UniProtKB-UniRule"/>
</dbReference>
<dbReference type="GO" id="GO:0051539">
    <property type="term" value="F:4 iron, 4 sulfur cluster binding"/>
    <property type="evidence" value="ECO:0007669"/>
    <property type="project" value="UniProtKB-KW"/>
</dbReference>
<dbReference type="GO" id="GO:0046872">
    <property type="term" value="F:metal ion binding"/>
    <property type="evidence" value="ECO:0007669"/>
    <property type="project" value="UniProtKB-KW"/>
</dbReference>
<dbReference type="GO" id="GO:0009098">
    <property type="term" value="P:L-leucine biosynthetic process"/>
    <property type="evidence" value="ECO:0007669"/>
    <property type="project" value="UniProtKB-UniRule"/>
</dbReference>
<dbReference type="CDD" id="cd01583">
    <property type="entry name" value="IPMI"/>
    <property type="match status" value="1"/>
</dbReference>
<dbReference type="FunFam" id="3.30.499.10:FF:000007">
    <property type="entry name" value="3-isopropylmalate dehydratase large subunit"/>
    <property type="match status" value="1"/>
</dbReference>
<dbReference type="Gene3D" id="3.30.499.10">
    <property type="entry name" value="Aconitase, domain 3"/>
    <property type="match status" value="2"/>
</dbReference>
<dbReference type="HAMAP" id="MF_01026">
    <property type="entry name" value="LeuC_type1"/>
    <property type="match status" value="1"/>
</dbReference>
<dbReference type="InterPro" id="IPR004430">
    <property type="entry name" value="3-IsopropMal_deHydase_lsu"/>
</dbReference>
<dbReference type="InterPro" id="IPR015931">
    <property type="entry name" value="Acnase/IPM_dHydase_lsu_aba_1/3"/>
</dbReference>
<dbReference type="InterPro" id="IPR001030">
    <property type="entry name" value="Acoase/IPM_deHydtase_lsu_aba"/>
</dbReference>
<dbReference type="InterPro" id="IPR018136">
    <property type="entry name" value="Aconitase_4Fe-4S_BS"/>
</dbReference>
<dbReference type="InterPro" id="IPR036008">
    <property type="entry name" value="Aconitase_4Fe-4S_dom"/>
</dbReference>
<dbReference type="InterPro" id="IPR050067">
    <property type="entry name" value="IPM_dehydratase_rel_enz"/>
</dbReference>
<dbReference type="InterPro" id="IPR033941">
    <property type="entry name" value="IPMI_cat"/>
</dbReference>
<dbReference type="NCBIfam" id="TIGR00170">
    <property type="entry name" value="leuC"/>
    <property type="match status" value="1"/>
</dbReference>
<dbReference type="NCBIfam" id="NF004016">
    <property type="entry name" value="PRK05478.1"/>
    <property type="match status" value="1"/>
</dbReference>
<dbReference type="NCBIfam" id="NF009116">
    <property type="entry name" value="PRK12466.1"/>
    <property type="match status" value="1"/>
</dbReference>
<dbReference type="PANTHER" id="PTHR43822:SF9">
    <property type="entry name" value="3-ISOPROPYLMALATE DEHYDRATASE"/>
    <property type="match status" value="1"/>
</dbReference>
<dbReference type="PANTHER" id="PTHR43822">
    <property type="entry name" value="HOMOACONITASE, MITOCHONDRIAL-RELATED"/>
    <property type="match status" value="1"/>
</dbReference>
<dbReference type="Pfam" id="PF00330">
    <property type="entry name" value="Aconitase"/>
    <property type="match status" value="1"/>
</dbReference>
<dbReference type="PRINTS" id="PR00415">
    <property type="entry name" value="ACONITASE"/>
</dbReference>
<dbReference type="SUPFAM" id="SSF53732">
    <property type="entry name" value="Aconitase iron-sulfur domain"/>
    <property type="match status" value="1"/>
</dbReference>
<dbReference type="PROSITE" id="PS00450">
    <property type="entry name" value="ACONITASE_1"/>
    <property type="match status" value="1"/>
</dbReference>
<reference key="1">
    <citation type="journal article" date="2004" name="J. Mol. Microbiol. Biotechnol.">
        <title>The complete genome sequence of Bacillus licheniformis DSM13, an organism with great industrial potential.</title>
        <authorList>
            <person name="Veith B."/>
            <person name="Herzberg C."/>
            <person name="Steckel S."/>
            <person name="Feesche J."/>
            <person name="Maurer K.H."/>
            <person name="Ehrenreich P."/>
            <person name="Baeumer S."/>
            <person name="Henne A."/>
            <person name="Liesegang H."/>
            <person name="Merkl R."/>
            <person name="Ehrenreich A."/>
            <person name="Gottschalk G."/>
        </authorList>
    </citation>
    <scope>NUCLEOTIDE SEQUENCE [LARGE SCALE GENOMIC DNA]</scope>
    <source>
        <strain>ATCC 14580 / DSM 13 / JCM 2505 / CCUG 7422 / NBRC 12200 / NCIMB 9375 / NCTC 10341 / NRRL NRS-1264 / Gibson 46</strain>
    </source>
</reference>
<reference key="2">
    <citation type="journal article" date="2004" name="Genome Biol.">
        <title>Complete genome sequence of the industrial bacterium Bacillus licheniformis and comparisons with closely related Bacillus species.</title>
        <authorList>
            <person name="Rey M.W."/>
            <person name="Ramaiya P."/>
            <person name="Nelson B.A."/>
            <person name="Brody-Karpin S.D."/>
            <person name="Zaretsky E.J."/>
            <person name="Tang M."/>
            <person name="Lopez de Leon A."/>
            <person name="Xiang H."/>
            <person name="Gusti V."/>
            <person name="Clausen I.G."/>
            <person name="Olsen P.B."/>
            <person name="Rasmussen M.D."/>
            <person name="Andersen J.T."/>
            <person name="Joergensen P.L."/>
            <person name="Larsen T.S."/>
            <person name="Sorokin A."/>
            <person name="Bolotin A."/>
            <person name="Lapidus A."/>
            <person name="Galleron N."/>
            <person name="Ehrlich S.D."/>
            <person name="Berka R.M."/>
        </authorList>
    </citation>
    <scope>NUCLEOTIDE SEQUENCE [LARGE SCALE GENOMIC DNA]</scope>
    <source>
        <strain>ATCC 14580 / DSM 13 / JCM 2505 / CCUG 7422 / NBRC 12200 / NCIMB 9375 / NCTC 10341 / NRRL NRS-1264 / Gibson 46</strain>
    </source>
</reference>
<organism>
    <name type="scientific">Bacillus licheniformis (strain ATCC 14580 / DSM 13 / JCM 2505 / CCUG 7422 / NBRC 12200 / NCIMB 9375 / NCTC 10341 / NRRL NRS-1264 / Gibson 46)</name>
    <dbReference type="NCBI Taxonomy" id="279010"/>
    <lineage>
        <taxon>Bacteria</taxon>
        <taxon>Bacillati</taxon>
        <taxon>Bacillota</taxon>
        <taxon>Bacilli</taxon>
        <taxon>Bacillales</taxon>
        <taxon>Bacillaceae</taxon>
        <taxon>Bacillus</taxon>
    </lineage>
</organism>